<protein>
    <recommendedName>
        <fullName evidence="1">Small ribosomal subunit protein uS8</fullName>
    </recommendedName>
    <alternativeName>
        <fullName evidence="2">30S ribosomal protein S8</fullName>
    </alternativeName>
</protein>
<reference key="1">
    <citation type="submission" date="2007-04" db="EMBL/GenBank/DDBJ databases">
        <title>Complete sequence of Pseudomonas mendocina ymp.</title>
        <authorList>
            <consortium name="US DOE Joint Genome Institute"/>
            <person name="Copeland A."/>
            <person name="Lucas S."/>
            <person name="Lapidus A."/>
            <person name="Barry K."/>
            <person name="Glavina del Rio T."/>
            <person name="Dalin E."/>
            <person name="Tice H."/>
            <person name="Pitluck S."/>
            <person name="Kiss H."/>
            <person name="Brettin T."/>
            <person name="Detter J.C."/>
            <person name="Bruce D."/>
            <person name="Han C."/>
            <person name="Schmutz J."/>
            <person name="Larimer F."/>
            <person name="Land M."/>
            <person name="Hauser L."/>
            <person name="Kyrpides N."/>
            <person name="Mikhailova N."/>
            <person name="Hersman L."/>
            <person name="Dubois J."/>
            <person name="Maurice P."/>
            <person name="Richardson P."/>
        </authorList>
    </citation>
    <scope>NUCLEOTIDE SEQUENCE [LARGE SCALE GENOMIC DNA]</scope>
    <source>
        <strain>ymp</strain>
    </source>
</reference>
<keyword id="KW-0687">Ribonucleoprotein</keyword>
<keyword id="KW-0689">Ribosomal protein</keyword>
<keyword id="KW-0694">RNA-binding</keyword>
<keyword id="KW-0699">rRNA-binding</keyword>
<organism>
    <name type="scientific">Ectopseudomonas mendocina (strain ymp)</name>
    <name type="common">Pseudomonas mendocina</name>
    <dbReference type="NCBI Taxonomy" id="399739"/>
    <lineage>
        <taxon>Bacteria</taxon>
        <taxon>Pseudomonadati</taxon>
        <taxon>Pseudomonadota</taxon>
        <taxon>Gammaproteobacteria</taxon>
        <taxon>Pseudomonadales</taxon>
        <taxon>Pseudomonadaceae</taxon>
        <taxon>Ectopseudomonas</taxon>
    </lineage>
</organism>
<proteinExistence type="inferred from homology"/>
<accession>A4XZ76</accession>
<dbReference type="EMBL" id="CP000680">
    <property type="protein sequence ID" value="ABP86642.1"/>
    <property type="molecule type" value="Genomic_DNA"/>
</dbReference>
<dbReference type="SMR" id="A4XZ76"/>
<dbReference type="STRING" id="399739.Pmen_3895"/>
<dbReference type="KEGG" id="pmy:Pmen_3895"/>
<dbReference type="eggNOG" id="COG0096">
    <property type="taxonomic scope" value="Bacteria"/>
</dbReference>
<dbReference type="HOGENOM" id="CLU_098428_0_0_6"/>
<dbReference type="OrthoDB" id="9802617at2"/>
<dbReference type="GO" id="GO:1990904">
    <property type="term" value="C:ribonucleoprotein complex"/>
    <property type="evidence" value="ECO:0007669"/>
    <property type="project" value="UniProtKB-KW"/>
</dbReference>
<dbReference type="GO" id="GO:0005840">
    <property type="term" value="C:ribosome"/>
    <property type="evidence" value="ECO:0007669"/>
    <property type="project" value="UniProtKB-KW"/>
</dbReference>
<dbReference type="GO" id="GO:0019843">
    <property type="term" value="F:rRNA binding"/>
    <property type="evidence" value="ECO:0007669"/>
    <property type="project" value="UniProtKB-UniRule"/>
</dbReference>
<dbReference type="GO" id="GO:0003735">
    <property type="term" value="F:structural constituent of ribosome"/>
    <property type="evidence" value="ECO:0007669"/>
    <property type="project" value="InterPro"/>
</dbReference>
<dbReference type="GO" id="GO:0006412">
    <property type="term" value="P:translation"/>
    <property type="evidence" value="ECO:0007669"/>
    <property type="project" value="UniProtKB-UniRule"/>
</dbReference>
<dbReference type="FunFam" id="3.30.1370.30:FF:000003">
    <property type="entry name" value="30S ribosomal protein S8"/>
    <property type="match status" value="1"/>
</dbReference>
<dbReference type="FunFam" id="3.30.1490.10:FF:000001">
    <property type="entry name" value="30S ribosomal protein S8"/>
    <property type="match status" value="1"/>
</dbReference>
<dbReference type="Gene3D" id="3.30.1370.30">
    <property type="match status" value="1"/>
</dbReference>
<dbReference type="Gene3D" id="3.30.1490.10">
    <property type="match status" value="1"/>
</dbReference>
<dbReference type="HAMAP" id="MF_01302_B">
    <property type="entry name" value="Ribosomal_uS8_B"/>
    <property type="match status" value="1"/>
</dbReference>
<dbReference type="InterPro" id="IPR000630">
    <property type="entry name" value="Ribosomal_uS8"/>
</dbReference>
<dbReference type="InterPro" id="IPR047863">
    <property type="entry name" value="Ribosomal_uS8_CS"/>
</dbReference>
<dbReference type="InterPro" id="IPR035987">
    <property type="entry name" value="Ribosomal_uS8_sf"/>
</dbReference>
<dbReference type="NCBIfam" id="NF001109">
    <property type="entry name" value="PRK00136.1"/>
    <property type="match status" value="1"/>
</dbReference>
<dbReference type="PANTHER" id="PTHR11758">
    <property type="entry name" value="40S RIBOSOMAL PROTEIN S15A"/>
    <property type="match status" value="1"/>
</dbReference>
<dbReference type="Pfam" id="PF00410">
    <property type="entry name" value="Ribosomal_S8"/>
    <property type="match status" value="1"/>
</dbReference>
<dbReference type="SUPFAM" id="SSF56047">
    <property type="entry name" value="Ribosomal protein S8"/>
    <property type="match status" value="1"/>
</dbReference>
<dbReference type="PROSITE" id="PS00053">
    <property type="entry name" value="RIBOSOMAL_S8"/>
    <property type="match status" value="1"/>
</dbReference>
<evidence type="ECO:0000255" key="1">
    <source>
        <dbReference type="HAMAP-Rule" id="MF_01302"/>
    </source>
</evidence>
<evidence type="ECO:0000305" key="2"/>
<sequence>MSMQDPLADMLTRIRNAQMAEKSVVSMPSSTLKVAVAKVLKDEGYIAGYEVNGEAKPQLSIELKYFEGRPVIEEVKRVSRPGLRQYKSVDDLPKVRGGLGVSIVSTNKGVMTDRAARAAGVGGEVLCTVF</sequence>
<gene>
    <name evidence="1" type="primary">rpsH</name>
    <name type="ordered locus">Pmen_3895</name>
</gene>
<feature type="chain" id="PRO_1000051790" description="Small ribosomal subunit protein uS8">
    <location>
        <begin position="1"/>
        <end position="130"/>
    </location>
</feature>
<comment type="function">
    <text evidence="1">One of the primary rRNA binding proteins, it binds directly to 16S rRNA central domain where it helps coordinate assembly of the platform of the 30S subunit.</text>
</comment>
<comment type="subunit">
    <text evidence="1">Part of the 30S ribosomal subunit. Contacts proteins S5 and S12.</text>
</comment>
<comment type="similarity">
    <text evidence="1">Belongs to the universal ribosomal protein uS8 family.</text>
</comment>
<name>RS8_ECTM1</name>